<dbReference type="EMBL" id="AF038154">
    <property type="protein sequence ID" value="AAB96910.2"/>
    <property type="molecule type" value="Genomic_DNA"/>
</dbReference>
<dbReference type="EMBL" id="CP017623">
    <property type="protein sequence ID" value="AOW26003.1"/>
    <property type="molecule type" value="Genomic_DNA"/>
</dbReference>
<dbReference type="RefSeq" id="XP_721512.1">
    <property type="nucleotide sequence ID" value="XM_716419.1"/>
</dbReference>
<dbReference type="SMR" id="O42766"/>
<dbReference type="BioGRID" id="1219904">
    <property type="interactions" value="4"/>
</dbReference>
<dbReference type="FunCoup" id="O42766">
    <property type="interactions" value="1542"/>
</dbReference>
<dbReference type="STRING" id="237561.O42766"/>
<dbReference type="EnsemblFungi" id="C1_03220C_A-T">
    <property type="protein sequence ID" value="C1_03220C_A-T-p1"/>
    <property type="gene ID" value="C1_03220C_A"/>
</dbReference>
<dbReference type="GeneID" id="3636810"/>
<dbReference type="KEGG" id="cal:CAALFM_C103220CA"/>
<dbReference type="CGD" id="CAL0000198341">
    <property type="gene designation" value="BMH1"/>
</dbReference>
<dbReference type="VEuPathDB" id="FungiDB:C1_03220C_A"/>
<dbReference type="eggNOG" id="KOG0841">
    <property type="taxonomic scope" value="Eukaryota"/>
</dbReference>
<dbReference type="HOGENOM" id="CLU_058290_0_0_1"/>
<dbReference type="InParanoid" id="O42766"/>
<dbReference type="OMA" id="KGCQLAR"/>
<dbReference type="OrthoDB" id="10260625at2759"/>
<dbReference type="PHI-base" id="PHI:2816"/>
<dbReference type="PHI-base" id="PHI:3497"/>
<dbReference type="PRO" id="PR:O42766"/>
<dbReference type="Proteomes" id="UP000000559">
    <property type="component" value="Chromosome 1"/>
</dbReference>
<dbReference type="GO" id="GO:0009986">
    <property type="term" value="C:cell surface"/>
    <property type="evidence" value="ECO:0000314"/>
    <property type="project" value="CGD"/>
</dbReference>
<dbReference type="GO" id="GO:0005737">
    <property type="term" value="C:cytoplasm"/>
    <property type="evidence" value="ECO:0000318"/>
    <property type="project" value="GO_Central"/>
</dbReference>
<dbReference type="GO" id="GO:1903561">
    <property type="term" value="C:extracellular vesicle"/>
    <property type="evidence" value="ECO:0000314"/>
    <property type="project" value="CGD"/>
</dbReference>
<dbReference type="GO" id="GO:0005886">
    <property type="term" value="C:plasma membrane"/>
    <property type="evidence" value="ECO:0000314"/>
    <property type="project" value="CGD"/>
</dbReference>
<dbReference type="GO" id="GO:0030445">
    <property type="term" value="C:yeast-form cell wall"/>
    <property type="evidence" value="ECO:0000314"/>
    <property type="project" value="CGD"/>
</dbReference>
<dbReference type="GO" id="GO:0034605">
    <property type="term" value="P:cellular response to heat"/>
    <property type="evidence" value="ECO:0000315"/>
    <property type="project" value="CGD"/>
</dbReference>
<dbReference type="GO" id="GO:0036244">
    <property type="term" value="P:cellular response to neutral pH"/>
    <property type="evidence" value="ECO:0000315"/>
    <property type="project" value="CGD"/>
</dbReference>
<dbReference type="GO" id="GO:0001410">
    <property type="term" value="P:chlamydospore formation"/>
    <property type="evidence" value="ECO:0000315"/>
    <property type="project" value="CGD"/>
</dbReference>
<dbReference type="GO" id="GO:0030447">
    <property type="term" value="P:filamentous growth"/>
    <property type="evidence" value="ECO:0000315"/>
    <property type="project" value="CGD"/>
</dbReference>
<dbReference type="GO" id="GO:0044182">
    <property type="term" value="P:filamentous growth of a population of unicellular organisms"/>
    <property type="evidence" value="ECO:0000315"/>
    <property type="project" value="CGD"/>
</dbReference>
<dbReference type="GO" id="GO:0036180">
    <property type="term" value="P:filamentous growth of a population of unicellular organisms in response to biotic stimulus"/>
    <property type="evidence" value="ECO:0000315"/>
    <property type="project" value="CGD"/>
</dbReference>
<dbReference type="GO" id="GO:0036168">
    <property type="term" value="P:filamentous growth of a population of unicellular organisms in response to heat"/>
    <property type="evidence" value="ECO:0000315"/>
    <property type="project" value="CGD"/>
</dbReference>
<dbReference type="GO" id="GO:0036178">
    <property type="term" value="P:filamentous growth of a population of unicellular organisms in response to neutral pH"/>
    <property type="evidence" value="ECO:0000315"/>
    <property type="project" value="CGD"/>
</dbReference>
<dbReference type="GO" id="GO:1900445">
    <property type="term" value="P:positive regulation of filamentous growth of a population of unicellular organisms in response to biotic stimulus"/>
    <property type="evidence" value="ECO:0000315"/>
    <property type="project" value="CGD"/>
</dbReference>
<dbReference type="GO" id="GO:1900442">
    <property type="term" value="P:positive regulation of filamentous growth of a population of unicellular organisms in response to neutral pH"/>
    <property type="evidence" value="ECO:0000315"/>
    <property type="project" value="CGD"/>
</dbReference>
<dbReference type="GO" id="GO:0008104">
    <property type="term" value="P:protein localization"/>
    <property type="evidence" value="ECO:0000318"/>
    <property type="project" value="GO_Central"/>
</dbReference>
<dbReference type="GO" id="GO:0006109">
    <property type="term" value="P:regulation of carbohydrate metabolic process"/>
    <property type="evidence" value="ECO:0000315"/>
    <property type="project" value="CGD"/>
</dbReference>
<dbReference type="GO" id="GO:0007165">
    <property type="term" value="P:signal transduction"/>
    <property type="evidence" value="ECO:0000318"/>
    <property type="project" value="GO_Central"/>
</dbReference>
<dbReference type="FunFam" id="1.20.190.20:FF:000002">
    <property type="entry name" value="14-3-3 protein epsilon"/>
    <property type="match status" value="1"/>
</dbReference>
<dbReference type="Gene3D" id="1.20.190.20">
    <property type="entry name" value="14-3-3 domain"/>
    <property type="match status" value="1"/>
</dbReference>
<dbReference type="InterPro" id="IPR000308">
    <property type="entry name" value="14-3-3"/>
</dbReference>
<dbReference type="InterPro" id="IPR023409">
    <property type="entry name" value="14-3-3_CS"/>
</dbReference>
<dbReference type="InterPro" id="IPR036815">
    <property type="entry name" value="14-3-3_dom_sf"/>
</dbReference>
<dbReference type="InterPro" id="IPR023410">
    <property type="entry name" value="14-3-3_domain"/>
</dbReference>
<dbReference type="PANTHER" id="PTHR18860">
    <property type="entry name" value="14-3-3 PROTEIN"/>
    <property type="match status" value="1"/>
</dbReference>
<dbReference type="Pfam" id="PF00244">
    <property type="entry name" value="14-3-3"/>
    <property type="match status" value="1"/>
</dbReference>
<dbReference type="PIRSF" id="PIRSF000868">
    <property type="entry name" value="14-3-3"/>
    <property type="match status" value="1"/>
</dbReference>
<dbReference type="PRINTS" id="PR00305">
    <property type="entry name" value="1433ZETA"/>
</dbReference>
<dbReference type="SMART" id="SM00101">
    <property type="entry name" value="14_3_3"/>
    <property type="match status" value="1"/>
</dbReference>
<dbReference type="SUPFAM" id="SSF48445">
    <property type="entry name" value="14-3-3 protein"/>
    <property type="match status" value="1"/>
</dbReference>
<dbReference type="PROSITE" id="PS00796">
    <property type="entry name" value="1433_1"/>
    <property type="match status" value="1"/>
</dbReference>
<dbReference type="PROSITE" id="PS00797">
    <property type="entry name" value="1433_2"/>
    <property type="match status" value="1"/>
</dbReference>
<organism>
    <name type="scientific">Candida albicans (strain SC5314 / ATCC MYA-2876)</name>
    <name type="common">Yeast</name>
    <dbReference type="NCBI Taxonomy" id="237561"/>
    <lineage>
        <taxon>Eukaryota</taxon>
        <taxon>Fungi</taxon>
        <taxon>Dikarya</taxon>
        <taxon>Ascomycota</taxon>
        <taxon>Saccharomycotina</taxon>
        <taxon>Pichiomycetes</taxon>
        <taxon>Debaryomycetaceae</taxon>
        <taxon>Candida/Lodderomyces clade</taxon>
        <taxon>Candida</taxon>
    </lineage>
</organism>
<reference key="1">
    <citation type="journal article" date="2002" name="Yeast">
        <title>The Candida albicans 14-3-3 gene, BMH1, is essential for growth.</title>
        <authorList>
            <person name="Cognetti D."/>
            <person name="Davis D."/>
            <person name="Sturtevant J."/>
        </authorList>
    </citation>
    <scope>NUCLEOTIDE SEQUENCE [GENOMIC DNA]</scope>
    <source>
        <strain>SC5314 / ATCC MYA-2876</strain>
    </source>
</reference>
<reference key="2">
    <citation type="journal article" date="2004" name="Proc. Natl. Acad. Sci. U.S.A.">
        <title>The diploid genome sequence of Candida albicans.</title>
        <authorList>
            <person name="Jones T."/>
            <person name="Federspiel N.A."/>
            <person name="Chibana H."/>
            <person name="Dungan J."/>
            <person name="Kalman S."/>
            <person name="Magee B.B."/>
            <person name="Newport G."/>
            <person name="Thorstenson Y.R."/>
            <person name="Agabian N."/>
            <person name="Magee P.T."/>
            <person name="Davis R.W."/>
            <person name="Scherer S."/>
        </authorList>
    </citation>
    <scope>NUCLEOTIDE SEQUENCE [LARGE SCALE GENOMIC DNA]</scope>
    <source>
        <strain>SC5314 / ATCC MYA-2876</strain>
    </source>
</reference>
<reference key="3">
    <citation type="journal article" date="2007" name="Genome Biol.">
        <title>Assembly of the Candida albicans genome into sixteen supercontigs aligned on the eight chromosomes.</title>
        <authorList>
            <person name="van het Hoog M."/>
            <person name="Rast T.J."/>
            <person name="Martchenko M."/>
            <person name="Grindle S."/>
            <person name="Dignard D."/>
            <person name="Hogues H."/>
            <person name="Cuomo C."/>
            <person name="Berriman M."/>
            <person name="Scherer S."/>
            <person name="Magee B.B."/>
            <person name="Whiteway M."/>
            <person name="Chibana H."/>
            <person name="Nantel A."/>
            <person name="Magee P.T."/>
        </authorList>
    </citation>
    <scope>GENOME REANNOTATION</scope>
    <source>
        <strain>SC5314 / ATCC MYA-2876</strain>
    </source>
</reference>
<reference key="4">
    <citation type="journal article" date="2013" name="Genome Biol.">
        <title>Assembly of a phased diploid Candida albicans genome facilitates allele-specific measurements and provides a simple model for repeat and indel structure.</title>
        <authorList>
            <person name="Muzzey D."/>
            <person name="Schwartz K."/>
            <person name="Weissman J.S."/>
            <person name="Sherlock G."/>
        </authorList>
    </citation>
    <scope>NUCLEOTIDE SEQUENCE [LARGE SCALE GENOMIC DNA]</scope>
    <scope>GENOME REANNOTATION</scope>
    <source>
        <strain>SC5314 / ATCC MYA-2876</strain>
    </source>
</reference>
<gene>
    <name type="primary">BMH1</name>
    <name type="synonym">BMH</name>
    <name type="ordered locus">CAALFM_C103220CA</name>
    <name type="ORF">CaO19.10532</name>
    <name type="ORF">CaO19.3014</name>
</gene>
<comment type="similarity">
    <text evidence="2">Belongs to the 14-3-3 family.</text>
</comment>
<feature type="chain" id="PRO_0000058719" description="14-3-3 protein homolog">
    <location>
        <begin position="1"/>
        <end position="264"/>
    </location>
</feature>
<feature type="region of interest" description="Disordered" evidence="1">
    <location>
        <begin position="236"/>
        <end position="264"/>
    </location>
</feature>
<feature type="compositionally biased region" description="Low complexity" evidence="1">
    <location>
        <begin position="236"/>
        <end position="258"/>
    </location>
</feature>
<keyword id="KW-1185">Reference proteome</keyword>
<accession>O42766</accession>
<accession>A0A1D8PCZ7</accession>
<accession>Q5AI38</accession>
<proteinExistence type="inferred from homology"/>
<protein>
    <recommendedName>
        <fullName>14-3-3 protein homolog</fullName>
    </recommendedName>
</protein>
<evidence type="ECO:0000256" key="1">
    <source>
        <dbReference type="SAM" id="MobiDB-lite"/>
    </source>
</evidence>
<evidence type="ECO:0000305" key="2"/>
<name>1433_CANAL</name>
<sequence>MPASREDSVYLAKLAEQAERYEEMVENMKAVASSGQELSVEERNLLSVAYKNVIGARRASWRIVSSIEQKEEAKGNESQVALIRDYRAKIEAELSKICEDILSVLSDHLITSAQTGESKVFYYKMKGDYHRYLAEFAIAEKRKEAADLSLEAYKAASDVAVTELPPTHPIRLGLALNFSVFYYEILNSPDRACHLAKQAFDDAVADLETLSEDSYKDSTLIMQLLRDNLTLWTDLSEAPAATEEQQQSSQAPAAQPTEGKADQE</sequence>